<protein>
    <recommendedName>
        <fullName evidence="1">ATP synthase subunit delta</fullName>
    </recommendedName>
    <alternativeName>
        <fullName evidence="1">ATP synthase F(1) sector subunit delta</fullName>
    </alternativeName>
    <alternativeName>
        <fullName evidence="1">F-type ATPase subunit delta</fullName>
        <shortName evidence="1">F-ATPase subunit delta</shortName>
    </alternativeName>
</protein>
<feature type="chain" id="PRO_1000184639" description="ATP synthase subunit delta">
    <location>
        <begin position="1"/>
        <end position="177"/>
    </location>
</feature>
<gene>
    <name evidence="1" type="primary">atpH</name>
    <name type="ordered locus">VSAL_I3062</name>
</gene>
<evidence type="ECO:0000255" key="1">
    <source>
        <dbReference type="HAMAP-Rule" id="MF_01416"/>
    </source>
</evidence>
<keyword id="KW-0066">ATP synthesis</keyword>
<keyword id="KW-0997">Cell inner membrane</keyword>
<keyword id="KW-1003">Cell membrane</keyword>
<keyword id="KW-0139">CF(1)</keyword>
<keyword id="KW-0375">Hydrogen ion transport</keyword>
<keyword id="KW-0406">Ion transport</keyword>
<keyword id="KW-0472">Membrane</keyword>
<keyword id="KW-0813">Transport</keyword>
<accession>B6EHU0</accession>
<comment type="function">
    <text evidence="1">F(1)F(0) ATP synthase produces ATP from ADP in the presence of a proton or sodium gradient. F-type ATPases consist of two structural domains, F(1) containing the extramembraneous catalytic core and F(0) containing the membrane proton channel, linked together by a central stalk and a peripheral stalk. During catalysis, ATP synthesis in the catalytic domain of F(1) is coupled via a rotary mechanism of the central stalk subunits to proton translocation.</text>
</comment>
<comment type="function">
    <text evidence="1">This protein is part of the stalk that links CF(0) to CF(1). It either transmits conformational changes from CF(0) to CF(1) or is implicated in proton conduction.</text>
</comment>
<comment type="subunit">
    <text evidence="1">F-type ATPases have 2 components, F(1) - the catalytic core - and F(0) - the membrane proton channel. F(1) has five subunits: alpha(3), beta(3), gamma(1), delta(1), epsilon(1). F(0) has three main subunits: a(1), b(2) and c(10-14). The alpha and beta chains form an alternating ring which encloses part of the gamma chain. F(1) is attached to F(0) by a central stalk formed by the gamma and epsilon chains, while a peripheral stalk is formed by the delta and b chains.</text>
</comment>
<comment type="subcellular location">
    <subcellularLocation>
        <location evidence="1">Cell inner membrane</location>
        <topology evidence="1">Peripheral membrane protein</topology>
    </subcellularLocation>
</comment>
<comment type="similarity">
    <text evidence="1">Belongs to the ATPase delta chain family.</text>
</comment>
<sequence length="177" mass="19748">MSTMTTIARPYAKAAFDFAVEKNELNQWVQMLTFCSEVTKNKDMAQLLDGAVAPEKLAEIFISICGEQLNEFGQNLIHIMAENGRLKVLPDVLDQYILLQHEFEKVIDAEIISAIELTEQQKADIGAKLEARLERKVKLNCSVDEALLAGVIIRAGDLVIDNSVRGRLSRLSETLQS</sequence>
<dbReference type="EMBL" id="FM178379">
    <property type="protein sequence ID" value="CAQ80746.1"/>
    <property type="molecule type" value="Genomic_DNA"/>
</dbReference>
<dbReference type="RefSeq" id="WP_012551445.1">
    <property type="nucleotide sequence ID" value="NC_011312.1"/>
</dbReference>
<dbReference type="SMR" id="B6EHU0"/>
<dbReference type="KEGG" id="vsa:VSAL_I3062"/>
<dbReference type="eggNOG" id="COG0712">
    <property type="taxonomic scope" value="Bacteria"/>
</dbReference>
<dbReference type="HOGENOM" id="CLU_085114_3_0_6"/>
<dbReference type="Proteomes" id="UP000001730">
    <property type="component" value="Chromosome 1"/>
</dbReference>
<dbReference type="GO" id="GO:0005886">
    <property type="term" value="C:plasma membrane"/>
    <property type="evidence" value="ECO:0007669"/>
    <property type="project" value="UniProtKB-SubCell"/>
</dbReference>
<dbReference type="GO" id="GO:0045259">
    <property type="term" value="C:proton-transporting ATP synthase complex"/>
    <property type="evidence" value="ECO:0007669"/>
    <property type="project" value="UniProtKB-KW"/>
</dbReference>
<dbReference type="GO" id="GO:0046933">
    <property type="term" value="F:proton-transporting ATP synthase activity, rotational mechanism"/>
    <property type="evidence" value="ECO:0007669"/>
    <property type="project" value="UniProtKB-UniRule"/>
</dbReference>
<dbReference type="Gene3D" id="1.10.520.20">
    <property type="entry name" value="N-terminal domain of the delta subunit of the F1F0-ATP synthase"/>
    <property type="match status" value="1"/>
</dbReference>
<dbReference type="HAMAP" id="MF_01416">
    <property type="entry name" value="ATP_synth_delta_bact"/>
    <property type="match status" value="1"/>
</dbReference>
<dbReference type="InterPro" id="IPR026015">
    <property type="entry name" value="ATP_synth_OSCP/delta_N_sf"/>
</dbReference>
<dbReference type="InterPro" id="IPR020781">
    <property type="entry name" value="ATPase_OSCP/d_CS"/>
</dbReference>
<dbReference type="InterPro" id="IPR000711">
    <property type="entry name" value="ATPase_OSCP/dsu"/>
</dbReference>
<dbReference type="NCBIfam" id="TIGR01145">
    <property type="entry name" value="ATP_synt_delta"/>
    <property type="match status" value="1"/>
</dbReference>
<dbReference type="NCBIfam" id="NF004402">
    <property type="entry name" value="PRK05758.2-2"/>
    <property type="match status" value="1"/>
</dbReference>
<dbReference type="NCBIfam" id="NF004404">
    <property type="entry name" value="PRK05758.2-5"/>
    <property type="match status" value="1"/>
</dbReference>
<dbReference type="PANTHER" id="PTHR11910">
    <property type="entry name" value="ATP SYNTHASE DELTA CHAIN"/>
    <property type="match status" value="1"/>
</dbReference>
<dbReference type="Pfam" id="PF00213">
    <property type="entry name" value="OSCP"/>
    <property type="match status" value="1"/>
</dbReference>
<dbReference type="PRINTS" id="PR00125">
    <property type="entry name" value="ATPASEDELTA"/>
</dbReference>
<dbReference type="SUPFAM" id="SSF47928">
    <property type="entry name" value="N-terminal domain of the delta subunit of the F1F0-ATP synthase"/>
    <property type="match status" value="1"/>
</dbReference>
<dbReference type="PROSITE" id="PS00389">
    <property type="entry name" value="ATPASE_DELTA"/>
    <property type="match status" value="1"/>
</dbReference>
<proteinExistence type="inferred from homology"/>
<name>ATPD_ALISL</name>
<reference key="1">
    <citation type="journal article" date="2008" name="BMC Genomics">
        <title>The genome sequence of the fish pathogen Aliivibrio salmonicida strain LFI1238 shows extensive evidence of gene decay.</title>
        <authorList>
            <person name="Hjerde E."/>
            <person name="Lorentzen M.S."/>
            <person name="Holden M.T."/>
            <person name="Seeger K."/>
            <person name="Paulsen S."/>
            <person name="Bason N."/>
            <person name="Churcher C."/>
            <person name="Harris D."/>
            <person name="Norbertczak H."/>
            <person name="Quail M.A."/>
            <person name="Sanders S."/>
            <person name="Thurston S."/>
            <person name="Parkhill J."/>
            <person name="Willassen N.P."/>
            <person name="Thomson N.R."/>
        </authorList>
    </citation>
    <scope>NUCLEOTIDE SEQUENCE [LARGE SCALE GENOMIC DNA]</scope>
    <source>
        <strain>LFI1238</strain>
    </source>
</reference>
<organism>
    <name type="scientific">Aliivibrio salmonicida (strain LFI1238)</name>
    <name type="common">Vibrio salmonicida (strain LFI1238)</name>
    <dbReference type="NCBI Taxonomy" id="316275"/>
    <lineage>
        <taxon>Bacteria</taxon>
        <taxon>Pseudomonadati</taxon>
        <taxon>Pseudomonadota</taxon>
        <taxon>Gammaproteobacteria</taxon>
        <taxon>Vibrionales</taxon>
        <taxon>Vibrionaceae</taxon>
        <taxon>Aliivibrio</taxon>
    </lineage>
</organism>